<sequence>MANFISLKKNEDILDTIKKQQKIHSNQIVVYFRKTNLKNVRLAISISKKKFKLATQRNRIRRLIKAWFIAADIPIKSYDIVVLVKPSFIDGSFVLNCNNLKIILQRIINKEKR</sequence>
<reference key="1">
    <citation type="submission" date="2008-02" db="EMBL/GenBank/DDBJ databases">
        <title>Genome sequence of Ureaplasma parvum serovar 3.</title>
        <authorList>
            <person name="Methe B.A."/>
            <person name="Glass J."/>
            <person name="Waites K."/>
            <person name="Shrivastava S."/>
        </authorList>
    </citation>
    <scope>NUCLEOTIDE SEQUENCE [LARGE SCALE GENOMIC DNA]</scope>
    <source>
        <strain>ATCC 27815 / 27 / NCTC 11736</strain>
    </source>
</reference>
<comment type="function">
    <text evidence="1">RNaseP catalyzes the removal of the 5'-leader sequence from pre-tRNA to produce the mature 5'-terminus. It can also cleave other RNA substrates such as 4.5S RNA. The protein component plays an auxiliary but essential role in vivo by binding to the 5'-leader sequence and broadening the substrate specificity of the ribozyme.</text>
</comment>
<comment type="catalytic activity">
    <reaction evidence="1">
        <text>Endonucleolytic cleavage of RNA, removing 5'-extranucleotides from tRNA precursor.</text>
        <dbReference type="EC" id="3.1.26.5"/>
    </reaction>
</comment>
<comment type="subunit">
    <text evidence="1">Consists of a catalytic RNA component (M1 or rnpB) and a protein subunit.</text>
</comment>
<comment type="similarity">
    <text evidence="1">Belongs to the RnpA family.</text>
</comment>
<keyword id="KW-0255">Endonuclease</keyword>
<keyword id="KW-0378">Hydrolase</keyword>
<keyword id="KW-0540">Nuclease</keyword>
<keyword id="KW-0694">RNA-binding</keyword>
<keyword id="KW-0819">tRNA processing</keyword>
<feature type="chain" id="PRO_1000078213" description="Ribonuclease P protein component">
    <location>
        <begin position="1"/>
        <end position="113"/>
    </location>
</feature>
<evidence type="ECO:0000255" key="1">
    <source>
        <dbReference type="HAMAP-Rule" id="MF_00227"/>
    </source>
</evidence>
<accession>B1AJP4</accession>
<proteinExistence type="inferred from homology"/>
<organism>
    <name type="scientific">Ureaplasma parvum serovar 3 (strain ATCC 27815 / 27 / NCTC 11736)</name>
    <dbReference type="NCBI Taxonomy" id="505682"/>
    <lineage>
        <taxon>Bacteria</taxon>
        <taxon>Bacillati</taxon>
        <taxon>Mycoplasmatota</taxon>
        <taxon>Mycoplasmoidales</taxon>
        <taxon>Mycoplasmoidaceae</taxon>
        <taxon>Ureaplasma</taxon>
    </lineage>
</organism>
<protein>
    <recommendedName>
        <fullName evidence="1">Ribonuclease P protein component</fullName>
        <shortName evidence="1">RNase P protein</shortName>
        <shortName evidence="1">RNaseP protein</shortName>
        <ecNumber evidence="1">3.1.26.5</ecNumber>
    </recommendedName>
    <alternativeName>
        <fullName evidence="1">Protein C5</fullName>
    </alternativeName>
</protein>
<name>RNPA_UREP2</name>
<gene>
    <name evidence="1" type="primary">rnpA</name>
    <name type="ordered locus">UPA3_0643</name>
</gene>
<dbReference type="EC" id="3.1.26.5" evidence="1"/>
<dbReference type="EMBL" id="CP000942">
    <property type="protein sequence ID" value="ACA32790.1"/>
    <property type="molecule type" value="Genomic_DNA"/>
</dbReference>
<dbReference type="RefSeq" id="WP_006688777.1">
    <property type="nucleotide sequence ID" value="NC_010503.1"/>
</dbReference>
<dbReference type="SMR" id="B1AJP4"/>
<dbReference type="GeneID" id="29672643"/>
<dbReference type="KEGG" id="upa:UPA3_0643"/>
<dbReference type="HOGENOM" id="CLU_117179_9_4_14"/>
<dbReference type="Proteomes" id="UP000002162">
    <property type="component" value="Chromosome"/>
</dbReference>
<dbReference type="GO" id="GO:0030677">
    <property type="term" value="C:ribonuclease P complex"/>
    <property type="evidence" value="ECO:0007669"/>
    <property type="project" value="TreeGrafter"/>
</dbReference>
<dbReference type="GO" id="GO:0042781">
    <property type="term" value="F:3'-tRNA processing endoribonuclease activity"/>
    <property type="evidence" value="ECO:0007669"/>
    <property type="project" value="TreeGrafter"/>
</dbReference>
<dbReference type="GO" id="GO:0004526">
    <property type="term" value="F:ribonuclease P activity"/>
    <property type="evidence" value="ECO:0007669"/>
    <property type="project" value="UniProtKB-UniRule"/>
</dbReference>
<dbReference type="GO" id="GO:0000049">
    <property type="term" value="F:tRNA binding"/>
    <property type="evidence" value="ECO:0007669"/>
    <property type="project" value="UniProtKB-UniRule"/>
</dbReference>
<dbReference type="GO" id="GO:0001682">
    <property type="term" value="P:tRNA 5'-leader removal"/>
    <property type="evidence" value="ECO:0007669"/>
    <property type="project" value="UniProtKB-UniRule"/>
</dbReference>
<dbReference type="Gene3D" id="3.30.230.10">
    <property type="match status" value="1"/>
</dbReference>
<dbReference type="HAMAP" id="MF_00227">
    <property type="entry name" value="RNase_P"/>
    <property type="match status" value="1"/>
</dbReference>
<dbReference type="InterPro" id="IPR020568">
    <property type="entry name" value="Ribosomal_Su5_D2-typ_SF"/>
</dbReference>
<dbReference type="InterPro" id="IPR014721">
    <property type="entry name" value="Ribsml_uS5_D2-typ_fold_subgr"/>
</dbReference>
<dbReference type="InterPro" id="IPR000100">
    <property type="entry name" value="RNase_P"/>
</dbReference>
<dbReference type="InterPro" id="IPR020539">
    <property type="entry name" value="RNase_P_CS"/>
</dbReference>
<dbReference type="NCBIfam" id="TIGR00188">
    <property type="entry name" value="rnpA"/>
    <property type="match status" value="1"/>
</dbReference>
<dbReference type="PANTHER" id="PTHR33992">
    <property type="entry name" value="RIBONUCLEASE P PROTEIN COMPONENT"/>
    <property type="match status" value="1"/>
</dbReference>
<dbReference type="PANTHER" id="PTHR33992:SF1">
    <property type="entry name" value="RIBONUCLEASE P PROTEIN COMPONENT"/>
    <property type="match status" value="1"/>
</dbReference>
<dbReference type="Pfam" id="PF00825">
    <property type="entry name" value="Ribonuclease_P"/>
    <property type="match status" value="1"/>
</dbReference>
<dbReference type="SUPFAM" id="SSF54211">
    <property type="entry name" value="Ribosomal protein S5 domain 2-like"/>
    <property type="match status" value="1"/>
</dbReference>
<dbReference type="PROSITE" id="PS00648">
    <property type="entry name" value="RIBONUCLEASE_P"/>
    <property type="match status" value="1"/>
</dbReference>